<feature type="chain" id="PRO_0000079215" description="Anion exchange protein 2">
    <location>
        <begin position="1"/>
        <end position="1241"/>
    </location>
</feature>
<feature type="topological domain" description="Cytoplasmic" evidence="3">
    <location>
        <begin position="1"/>
        <end position="707"/>
    </location>
</feature>
<feature type="transmembrane region" description="Helical" evidence="3">
    <location>
        <begin position="708"/>
        <end position="731"/>
    </location>
</feature>
<feature type="transmembrane region" description="Helical" evidence="3">
    <location>
        <begin position="737"/>
        <end position="774"/>
    </location>
</feature>
<feature type="transmembrane region" description="Helical" evidence="3">
    <location>
        <begin position="784"/>
        <end position="816"/>
    </location>
</feature>
<feature type="transmembrane region" description="Helical" evidence="3">
    <location>
        <begin position="826"/>
        <end position="847"/>
    </location>
</feature>
<feature type="topological domain" description="Extracellular" evidence="3">
    <location>
        <begin position="848"/>
        <end position="900"/>
    </location>
</feature>
<feature type="transmembrane region" description="Helical" evidence="3">
    <location>
        <begin position="901"/>
        <end position="918"/>
    </location>
</feature>
<feature type="topological domain" description="Cytoplasmic" evidence="3">
    <location>
        <begin position="919"/>
        <end position="933"/>
    </location>
</feature>
<feature type="transmembrane region" description="Helical" evidence="3">
    <location>
        <begin position="934"/>
        <end position="954"/>
    </location>
</feature>
<feature type="transmembrane region" description="Helical" evidence="3">
    <location>
        <begin position="988"/>
        <end position="1010"/>
    </location>
</feature>
<feature type="transmembrane region" description="Helical" evidence="3">
    <location>
        <begin position="1036"/>
        <end position="1059"/>
    </location>
</feature>
<feature type="transmembrane region" description="Helical" evidence="3">
    <location>
        <begin position="1091"/>
        <end position="1136"/>
    </location>
</feature>
<feature type="transmembrane region" description="Helical" evidence="3">
    <location>
        <begin position="1163"/>
        <end position="1199"/>
    </location>
</feature>
<feature type="region of interest" description="Disordered" evidence="4">
    <location>
        <begin position="1"/>
        <end position="240"/>
    </location>
</feature>
<feature type="region of interest" description="Disordered" evidence="4">
    <location>
        <begin position="288"/>
        <end position="320"/>
    </location>
</feature>
<feature type="region of interest" description="Disordered" evidence="4">
    <location>
        <begin position="449"/>
        <end position="471"/>
    </location>
</feature>
<feature type="region of interest" description="Membrane (anion exchange)">
    <location>
        <begin position="708"/>
        <end position="1241"/>
    </location>
</feature>
<feature type="compositionally biased region" description="Basic and acidic residues" evidence="4">
    <location>
        <begin position="37"/>
        <end position="49"/>
    </location>
</feature>
<feature type="compositionally biased region" description="Basic and acidic residues" evidence="4">
    <location>
        <begin position="58"/>
        <end position="75"/>
    </location>
</feature>
<feature type="compositionally biased region" description="Basic residues" evidence="4">
    <location>
        <begin position="76"/>
        <end position="85"/>
    </location>
</feature>
<feature type="compositionally biased region" description="Basic residues" evidence="4">
    <location>
        <begin position="94"/>
        <end position="110"/>
    </location>
</feature>
<feature type="compositionally biased region" description="Acidic residues" evidence="4">
    <location>
        <begin position="120"/>
        <end position="133"/>
    </location>
</feature>
<feature type="compositionally biased region" description="Low complexity" evidence="4">
    <location>
        <begin position="141"/>
        <end position="155"/>
    </location>
</feature>
<feature type="compositionally biased region" description="Low complexity" evidence="4">
    <location>
        <begin position="189"/>
        <end position="209"/>
    </location>
</feature>
<feature type="compositionally biased region" description="Gly residues" evidence="4">
    <location>
        <begin position="210"/>
        <end position="219"/>
    </location>
</feature>
<feature type="modified residue" description="Phosphoserine" evidence="14">
    <location>
        <position position="113"/>
    </location>
</feature>
<feature type="modified residue" description="Phosphoserine" evidence="14">
    <location>
        <position position="132"/>
    </location>
</feature>
<feature type="modified residue" description="Phosphoserine" evidence="15">
    <location>
        <position position="144"/>
    </location>
</feature>
<feature type="modified residue" description="Phosphoserine" evidence="2">
    <location>
        <position position="170"/>
    </location>
</feature>
<feature type="modified residue" description="Phosphoserine" evidence="2">
    <location>
        <position position="172"/>
    </location>
</feature>
<feature type="modified residue" description="Phosphoserine" evidence="14 17">
    <location>
        <position position="173"/>
    </location>
</feature>
<feature type="modified residue" description="Phosphothreonine" evidence="14">
    <location>
        <position position="183"/>
    </location>
</feature>
<feature type="modified residue" description="Phosphoserine" evidence="17">
    <location>
        <position position="243"/>
    </location>
</feature>
<feature type="modified residue" description="Phosphothreonine" evidence="2">
    <location>
        <position position="257"/>
    </location>
</feature>
<feature type="modified residue" description="N6-methyllysine" evidence="18">
    <location>
        <position position="274"/>
    </location>
</feature>
<feature type="modified residue" description="Phosphoserine" evidence="16">
    <location>
        <position position="443"/>
    </location>
</feature>
<feature type="lipid moiety-binding region" description="S-palmitoyl cysteine" evidence="1">
    <location>
        <position position="1173"/>
    </location>
</feature>
<feature type="glycosylation site" description="N-linked (GlcNAc...) asparagine" evidence="3">
    <location>
        <position position="859"/>
    </location>
</feature>
<feature type="glycosylation site" description="N-linked (GlcNAc...) asparagine" evidence="3">
    <location>
        <position position="868"/>
    </location>
</feature>
<feature type="glycosylation site" description="N-linked (GlcNAc...) asparagine" evidence="3">
    <location>
        <position position="882"/>
    </location>
</feature>
<feature type="splice variant" id="VSP_000456" description="In isoform B1." evidence="12">
    <original>MSSAPRRPAKGADSFCT</original>
    <variation>MTQ</variation>
    <location>
        <begin position="1"/>
        <end position="17"/>
    </location>
</feature>
<feature type="splice variant" id="VSP_045953" description="In isoform B2." evidence="10">
    <original>MSSAPRRPAKGADSFCT</original>
    <variation>MDFLLRPQ</variation>
    <location>
        <begin position="1"/>
        <end position="17"/>
    </location>
</feature>
<feature type="sequence variant" id="VAR_025168" description="In dbSNP:rs2303929." evidence="8">
    <original>G</original>
    <variation>E</variation>
    <location>
        <position position="26"/>
    </location>
</feature>
<feature type="sequence variant" id="VAR_087349" description="In OPTB9; uncertain significance; affects function in osteoclast differentiation; fails to rescue impaired osteoclastogenesis when expressed in a Slc4a2-knockdown cells." evidence="7">
    <original>A</original>
    <variation>T</variation>
    <location>
        <position position="186"/>
    </location>
</feature>
<feature type="sequence variant" id="VAR_025169" description="In dbSNP:rs2229551." evidence="8">
    <original>E</original>
    <variation>V</variation>
    <location>
        <position position="202"/>
    </location>
</feature>
<feature type="sequence variant" id="VAR_025170" description="In dbSNP:rs35016052." evidence="8">
    <original>R</original>
    <variation>W</variation>
    <location>
        <position position="311"/>
    </location>
</feature>
<feature type="sequence variant" id="VAR_087350" description="In OPTB9; uncertain significance; reduced chloride:bicarbonate antiporter activity; affects function in osteoclast differentiation; fails to rescue impaired osteoclastogenesis when expressed in a Slc4a2-knockdown cells." evidence="7">
    <original>V</original>
    <variation>A</variation>
    <location>
        <position position="553"/>
    </location>
</feature>
<feature type="sequence variant" id="VAR_025171" description="In dbSNP:rs34918764." evidence="8">
    <original>L</original>
    <variation>F</variation>
    <location>
        <position position="1204"/>
    </location>
</feature>
<feature type="sequence conflict" description="In Ref. 1; CAA44067." evidence="13" ref="1">
    <original>R</original>
    <variation>L</variation>
    <location>
        <position position="7"/>
    </location>
</feature>
<feature type="sequence conflict" description="In Ref. 1; CAA44067." evidence="13" ref="1">
    <original>E</original>
    <variation>M</variation>
    <location>
        <position position="68"/>
    </location>
</feature>
<feature type="sequence conflict" description="In Ref. 1; CAA44067." evidence="13" ref="1">
    <original>H</original>
    <variation>R</variation>
    <location>
        <position position="74"/>
    </location>
</feature>
<feature type="sequence conflict" description="In Ref. 1; CAA44067." evidence="13" ref="1">
    <original>D</original>
    <variation>G</variation>
    <location>
        <position position="92"/>
    </location>
</feature>
<feature type="sequence conflict" description="In Ref. 1; CAA44067." evidence="13" ref="1">
    <original>E</original>
    <variation>V</variation>
    <location>
        <position position="122"/>
    </location>
</feature>
<feature type="sequence conflict" description="In Ref. 1; CAA44067." evidence="13" ref="1">
    <original>Q</original>
    <variation>R</variation>
    <location>
        <position position="157"/>
    </location>
</feature>
<feature type="sequence conflict" description="In Ref. 1; CAA44067." evidence="13" ref="1">
    <original>E</original>
    <variation>R</variation>
    <location>
        <position position="248"/>
    </location>
</feature>
<feature type="sequence conflict" description="In Ref. 7; CAA27556." evidence="13" ref="7">
    <location>
        <position position="399"/>
    </location>
</feature>
<feature type="sequence conflict" description="In Ref. 1; CAA44067." evidence="13" ref="1">
    <original>L</original>
    <variation>V</variation>
    <location>
        <position position="447"/>
    </location>
</feature>
<feature type="sequence conflict" description="In Ref. 7; CAA27556." evidence="13" ref="7">
    <original>LLGHHHGQGAESDPHVTEPLMGGVPE</original>
    <variation>CWGITMVRGLRVTPTSPSLSWEVFLR</variation>
    <location>
        <begin position="450"/>
        <end position="475"/>
    </location>
</feature>
<feature type="sequence conflict" description="In Ref. 1; CAA44067 and 7; CAA27556." evidence="13" ref="1 7">
    <original>EL</original>
    <variation>DV</variation>
    <location>
        <begin position="485"/>
        <end position="486"/>
    </location>
</feature>
<feature type="sequence conflict" description="In Ref. 3; BAG58592." evidence="13" ref="3">
    <original>E</original>
    <variation>K</variation>
    <location>
        <position position="571"/>
    </location>
</feature>
<feature type="sequence conflict" description="In Ref. 1; CAA44067 and 7; CAA27556." evidence="13" ref="1 7">
    <original>AAGAAEDDPLRRTGRP</original>
    <variation>RQGQLKMIPSADGAA</variation>
    <location>
        <begin position="666"/>
        <end position="681"/>
    </location>
</feature>
<feature type="sequence conflict" description="In Ref. 1; CAA44067 and 7; CAA27556." evidence="13" ref="1 7">
    <original>Q</original>
    <variation>R</variation>
    <location>
        <position position="824"/>
    </location>
</feature>
<feature type="sequence conflict" description="In Ref. 1; CAA44067 and 7; CAA27556." evidence="13" ref="1 7">
    <original>L</original>
    <variation>P</variation>
    <location>
        <position position="902"/>
    </location>
</feature>
<feature type="strand" evidence="20">
    <location>
        <begin position="322"/>
        <end position="330"/>
    </location>
</feature>
<feature type="strand" evidence="20">
    <location>
        <begin position="340"/>
        <end position="353"/>
    </location>
</feature>
<feature type="turn" evidence="20">
    <location>
        <begin position="355"/>
        <end position="357"/>
    </location>
</feature>
<feature type="strand" evidence="20">
    <location>
        <begin position="368"/>
        <end position="370"/>
    </location>
</feature>
<feature type="helix" evidence="20">
    <location>
        <begin position="371"/>
        <end position="380"/>
    </location>
</feature>
<feature type="strand" evidence="20">
    <location>
        <begin position="384"/>
        <end position="389"/>
    </location>
</feature>
<feature type="helix" evidence="20">
    <location>
        <begin position="394"/>
        <end position="406"/>
    </location>
</feature>
<feature type="turn" evidence="20">
    <location>
        <begin position="407"/>
        <end position="409"/>
    </location>
</feature>
<feature type="helix" evidence="20">
    <location>
        <begin position="413"/>
        <end position="415"/>
    </location>
</feature>
<feature type="helix" evidence="20">
    <location>
        <begin position="416"/>
        <end position="423"/>
    </location>
</feature>
<feature type="helix" evidence="20">
    <location>
        <begin position="501"/>
        <end position="509"/>
    </location>
</feature>
<feature type="strand" evidence="20">
    <location>
        <begin position="512"/>
        <end position="523"/>
    </location>
</feature>
<feature type="strand" evidence="20">
    <location>
        <begin position="531"/>
        <end position="541"/>
    </location>
</feature>
<feature type="strand" evidence="20">
    <location>
        <begin position="544"/>
        <end position="549"/>
    </location>
</feature>
<feature type="strand" evidence="20">
    <location>
        <begin position="553"/>
        <end position="561"/>
    </location>
</feature>
<feature type="strand" evidence="20">
    <location>
        <begin position="563"/>
        <end position="566"/>
    </location>
</feature>
<feature type="helix" evidence="20">
    <location>
        <begin position="569"/>
        <end position="579"/>
    </location>
</feature>
<feature type="helix" evidence="20">
    <location>
        <begin position="583"/>
        <end position="590"/>
    </location>
</feature>
<feature type="helix" evidence="20">
    <location>
        <begin position="595"/>
        <end position="606"/>
    </location>
</feature>
<feature type="strand" evidence="20">
    <location>
        <begin position="610"/>
        <end position="612"/>
    </location>
</feature>
<feature type="strand" evidence="20">
    <location>
        <begin position="619"/>
        <end position="621"/>
    </location>
</feature>
<feature type="helix" evidence="20">
    <location>
        <begin position="622"/>
        <end position="640"/>
    </location>
</feature>
<feature type="helix" evidence="21">
    <location>
        <begin position="683"/>
        <end position="692"/>
    </location>
</feature>
<feature type="helix" evidence="21">
    <location>
        <begin position="693"/>
        <end position="695"/>
    </location>
</feature>
<feature type="helix" evidence="21">
    <location>
        <begin position="697"/>
        <end position="701"/>
    </location>
</feature>
<feature type="helix" evidence="24">
    <location>
        <begin position="702"/>
        <end position="704"/>
    </location>
</feature>
<feature type="helix" evidence="21">
    <location>
        <begin position="706"/>
        <end position="733"/>
    </location>
</feature>
<feature type="strand" evidence="21">
    <location>
        <begin position="736"/>
        <end position="738"/>
    </location>
</feature>
<feature type="helix" evidence="21">
    <location>
        <begin position="741"/>
        <end position="757"/>
    </location>
</feature>
<feature type="helix" evidence="21">
    <location>
        <begin position="769"/>
        <end position="783"/>
    </location>
</feature>
<feature type="turn" evidence="21">
    <location>
        <begin position="784"/>
        <end position="786"/>
    </location>
</feature>
<feature type="helix" evidence="21">
    <location>
        <begin position="792"/>
        <end position="809"/>
    </location>
</feature>
<feature type="helix" evidence="21">
    <location>
        <begin position="812"/>
        <end position="818"/>
    </location>
</feature>
<feature type="helix" evidence="21">
    <location>
        <begin position="821"/>
        <end position="849"/>
    </location>
</feature>
<feature type="strand" evidence="21">
    <location>
        <begin position="898"/>
        <end position="900"/>
    </location>
</feature>
<feature type="helix" evidence="21">
    <location>
        <begin position="901"/>
        <end position="922"/>
    </location>
</feature>
<feature type="strand" evidence="22">
    <location>
        <begin position="924"/>
        <end position="927"/>
    </location>
</feature>
<feature type="helix" evidence="21">
    <location>
        <begin position="929"/>
        <end position="936"/>
    </location>
</feature>
<feature type="helix" evidence="21">
    <location>
        <begin position="939"/>
        <end position="953"/>
    </location>
</feature>
<feature type="strand" evidence="21">
    <location>
        <begin position="967"/>
        <end position="969"/>
    </location>
</feature>
<feature type="helix" evidence="21">
    <location>
        <begin position="973"/>
        <end position="975"/>
    </location>
</feature>
<feature type="strand" evidence="21">
    <location>
        <begin position="982"/>
        <end position="988"/>
    </location>
</feature>
<feature type="helix" evidence="21">
    <location>
        <begin position="992"/>
        <end position="996"/>
    </location>
</feature>
<feature type="helix" evidence="21">
    <location>
        <begin position="998"/>
        <end position="1019"/>
    </location>
</feature>
<feature type="strand" evidence="20">
    <location>
        <begin position="1022"/>
        <end position="1024"/>
    </location>
</feature>
<feature type="helix" evidence="21">
    <location>
        <begin position="1034"/>
        <end position="1046"/>
    </location>
</feature>
<feature type="helix" evidence="21">
    <location>
        <begin position="1047"/>
        <end position="1049"/>
    </location>
</feature>
<feature type="helix" evidence="21">
    <location>
        <begin position="1058"/>
        <end position="1065"/>
    </location>
</feature>
<feature type="strand" evidence="20">
    <location>
        <begin position="1068"/>
        <end position="1071"/>
    </location>
</feature>
<feature type="strand" evidence="19">
    <location>
        <begin position="1076"/>
        <end position="1079"/>
    </location>
</feature>
<feature type="strand" evidence="21">
    <location>
        <begin position="1083"/>
        <end position="1085"/>
    </location>
</feature>
<feature type="helix" evidence="21">
    <location>
        <begin position="1092"/>
        <end position="1101"/>
    </location>
</feature>
<feature type="turn" evidence="21">
    <location>
        <begin position="1102"/>
        <end position="1105"/>
    </location>
</feature>
<feature type="helix" evidence="21">
    <location>
        <begin position="1110"/>
        <end position="1112"/>
    </location>
</feature>
<feature type="helix" evidence="21">
    <location>
        <begin position="1115"/>
        <end position="1128"/>
    </location>
</feature>
<feature type="turn" evidence="21">
    <location>
        <begin position="1129"/>
        <end position="1132"/>
    </location>
</feature>
<feature type="helix" evidence="21">
    <location>
        <begin position="1134"/>
        <end position="1140"/>
    </location>
</feature>
<feature type="turn" evidence="21">
    <location>
        <begin position="1141"/>
        <end position="1143"/>
    </location>
</feature>
<feature type="helix" evidence="21">
    <location>
        <begin position="1146"/>
        <end position="1148"/>
    </location>
</feature>
<feature type="helix" evidence="21">
    <location>
        <begin position="1153"/>
        <end position="1156"/>
    </location>
</feature>
<feature type="helix" evidence="21">
    <location>
        <begin position="1160"/>
        <end position="1182"/>
    </location>
</feature>
<feature type="helix" evidence="21">
    <location>
        <begin position="1186"/>
        <end position="1188"/>
    </location>
</feature>
<feature type="helix" evidence="21">
    <location>
        <begin position="1189"/>
        <end position="1194"/>
    </location>
</feature>
<feature type="helix" evidence="21">
    <location>
        <begin position="1196"/>
        <end position="1207"/>
    </location>
</feature>
<feature type="helix" evidence="21">
    <location>
        <begin position="1210"/>
        <end position="1216"/>
    </location>
</feature>
<feature type="strand" evidence="19">
    <location>
        <begin position="1219"/>
        <end position="1221"/>
    </location>
</feature>
<feature type="strand" evidence="23">
    <location>
        <begin position="1228"/>
        <end position="1230"/>
    </location>
</feature>
<feature type="helix" evidence="23">
    <location>
        <begin position="1233"/>
        <end position="1235"/>
    </location>
</feature>
<evidence type="ECO:0000250" key="1"/>
<evidence type="ECO:0000250" key="2">
    <source>
        <dbReference type="UniProtKB" id="P13808"/>
    </source>
</evidence>
<evidence type="ECO:0000255" key="3"/>
<evidence type="ECO:0000256" key="4">
    <source>
        <dbReference type="SAM" id="MobiDB-lite"/>
    </source>
</evidence>
<evidence type="ECO:0000269" key="5">
    <source>
    </source>
</evidence>
<evidence type="ECO:0000269" key="6">
    <source>
    </source>
</evidence>
<evidence type="ECO:0000269" key="7">
    <source>
    </source>
</evidence>
<evidence type="ECO:0000269" key="8">
    <source ref="2"/>
</evidence>
<evidence type="ECO:0000303" key="9">
    <source>
    </source>
</evidence>
<evidence type="ECO:0000303" key="10">
    <source>
    </source>
</evidence>
<evidence type="ECO:0000303" key="11">
    <source>
    </source>
</evidence>
<evidence type="ECO:0000303" key="12">
    <source>
    </source>
</evidence>
<evidence type="ECO:0000305" key="13"/>
<evidence type="ECO:0007744" key="14">
    <source>
    </source>
</evidence>
<evidence type="ECO:0007744" key="15">
    <source>
    </source>
</evidence>
<evidence type="ECO:0007744" key="16">
    <source>
    </source>
</evidence>
<evidence type="ECO:0007744" key="17">
    <source>
    </source>
</evidence>
<evidence type="ECO:0007744" key="18">
    <source>
    </source>
</evidence>
<evidence type="ECO:0007829" key="19">
    <source>
        <dbReference type="PDB" id="8GV8"/>
    </source>
</evidence>
<evidence type="ECO:0007829" key="20">
    <source>
        <dbReference type="PDB" id="8GV9"/>
    </source>
</evidence>
<evidence type="ECO:0007829" key="21">
    <source>
        <dbReference type="PDB" id="8GVC"/>
    </source>
</evidence>
<evidence type="ECO:0007829" key="22">
    <source>
        <dbReference type="PDB" id="8GVE"/>
    </source>
</evidence>
<evidence type="ECO:0007829" key="23">
    <source>
        <dbReference type="PDB" id="8GVH"/>
    </source>
</evidence>
<evidence type="ECO:0007829" key="24">
    <source>
        <dbReference type="PDB" id="8JNI"/>
    </source>
</evidence>
<keyword id="KW-0002">3D-structure</keyword>
<keyword id="KW-0025">Alternative splicing</keyword>
<keyword id="KW-0039">Anion exchange</keyword>
<keyword id="KW-0050">Antiport</keyword>
<keyword id="KW-1003">Cell membrane</keyword>
<keyword id="KW-0325">Glycoprotein</keyword>
<keyword id="KW-0406">Ion transport</keyword>
<keyword id="KW-0449">Lipoprotein</keyword>
<keyword id="KW-0472">Membrane</keyword>
<keyword id="KW-0488">Methylation</keyword>
<keyword id="KW-0987">Osteopetrosis</keyword>
<keyword id="KW-0564">Palmitate</keyword>
<keyword id="KW-0597">Phosphoprotein</keyword>
<keyword id="KW-1267">Proteomics identification</keyword>
<keyword id="KW-1185">Reference proteome</keyword>
<keyword id="KW-0812">Transmembrane</keyword>
<keyword id="KW-1133">Transmembrane helix</keyword>
<keyword id="KW-0813">Transport</keyword>
<accession>P04920</accession>
<accession>B2R6T0</accession>
<accession>B4DIT0</accession>
<accession>D3DX05</accession>
<accession>F8W682</accession>
<accession>Q45EY5</accession>
<accession>Q969L3</accession>
<comment type="function">
    <text evidence="2 6 7">Sodium-independent anion exchanger which mediates the electroneutral exchange of chloride for bicarbonate ions across the cell membrane (PubMed:15184086, PubMed:34668226). Plays an important role in osteoclast differentiation and function (PubMed:34668226). Regulates bone resorption and calpain-dependent actin cytoskeleton organization in osteoclasts via anion exchange-dependent control of pH (By similarity). Essential for intracellular pH regulation in CD8(+) T-cells upon CD3 stimulation, modulating CD8(+) T-cell responses (By similarity).</text>
</comment>
<comment type="catalytic activity">
    <reaction evidence="7">
        <text>hydrogencarbonate(in) + chloride(out) = hydrogencarbonate(out) + chloride(in)</text>
        <dbReference type="Rhea" id="RHEA:72363"/>
        <dbReference type="ChEBI" id="CHEBI:17544"/>
        <dbReference type="ChEBI" id="CHEBI:17996"/>
    </reaction>
</comment>
<comment type="catalytic activity">
    <molecule>Isoform A</molecule>
    <reaction evidence="6">
        <text>hydrogencarbonate(in) + chloride(out) = hydrogencarbonate(out) + chloride(in)</text>
        <dbReference type="Rhea" id="RHEA:72363"/>
        <dbReference type="ChEBI" id="CHEBI:17544"/>
        <dbReference type="ChEBI" id="CHEBI:17996"/>
    </reaction>
</comment>
<comment type="catalytic activity">
    <molecule>Isoform B1</molecule>
    <reaction evidence="6">
        <text>hydrogencarbonate(in) + chloride(out) = hydrogencarbonate(out) + chloride(in)</text>
        <dbReference type="Rhea" id="RHEA:72363"/>
        <dbReference type="ChEBI" id="CHEBI:17544"/>
        <dbReference type="ChEBI" id="CHEBI:17996"/>
    </reaction>
</comment>
<comment type="catalytic activity">
    <molecule>Isoform B2</molecule>
    <reaction evidence="6">
        <text>hydrogencarbonate(in) + chloride(out) = hydrogencarbonate(out) + chloride(in)</text>
        <dbReference type="Rhea" id="RHEA:72363"/>
        <dbReference type="ChEBI" id="CHEBI:17544"/>
        <dbReference type="ChEBI" id="CHEBI:17996"/>
    </reaction>
</comment>
<comment type="interaction">
    <interactant intactId="EBI-1390787">
        <id>P04920</id>
    </interactant>
    <interactant intactId="EBI-17858294">
        <id>Q8NEQ6</id>
        <label>SRARP</label>
    </interactant>
    <organismsDiffer>false</organismsDiffer>
    <experiments>2</experiments>
</comment>
<comment type="subcellular location">
    <molecule>Isoform A</molecule>
    <subcellularLocation>
        <location evidence="6">Apical cell membrane</location>
        <topology evidence="3">Multi-pass membrane protein</topology>
    </subcellularLocation>
    <subcellularLocation>
        <location evidence="6">Basolateral cell membrane</location>
        <topology evidence="3">Multi-pass membrane protein</topology>
    </subcellularLocation>
</comment>
<comment type="subcellular location">
    <molecule>Isoform B1</molecule>
    <subcellularLocation>
        <location evidence="6">Apical cell membrane</location>
        <topology evidence="3">Multi-pass membrane protein</topology>
    </subcellularLocation>
    <subcellularLocation>
        <location evidence="6">Basolateral cell membrane</location>
        <topology evidence="3">Multi-pass membrane protein</topology>
    </subcellularLocation>
</comment>
<comment type="subcellular location">
    <molecule>Isoform B2</molecule>
    <subcellularLocation>
        <location evidence="6">Apical cell membrane</location>
        <topology evidence="3">Multi-pass membrane protein</topology>
    </subcellularLocation>
    <subcellularLocation>
        <location evidence="6">Basolateral cell membrane</location>
        <topology evidence="3">Multi-pass membrane protein</topology>
    </subcellularLocation>
</comment>
<comment type="alternative products">
    <event type="alternative splicing"/>
    <isoform>
        <id>P04920-1</id>
        <name evidence="9 11">A</name>
        <sequence type="displayed"/>
    </isoform>
    <isoform>
        <id>P04920-2</id>
        <name evidence="9 11">B1</name>
        <sequence type="described" ref="VSP_000456"/>
    </isoform>
    <isoform>
        <id>P04920-3</id>
        <name evidence="9 11">B2</name>
        <sequence type="described" ref="VSP_045953"/>
    </isoform>
    <text>Additional isoforms seem to exist.</text>
</comment>
<comment type="tissue specificity">
    <molecule>Isoform A</molecule>
    <text evidence="5">Expressed in the liver, stomach, kidney, prostate, thyroid and rectum.</text>
</comment>
<comment type="tissue specificity">
    <molecule>Isoform B1</molecule>
    <text evidence="5">Expressed in the liver and kidney.</text>
</comment>
<comment type="tissue specificity">
    <molecule>Isoform B2</molecule>
    <text evidence="5">Expressed in the liver and kidney.</text>
</comment>
<comment type="disease" evidence="7">
    <disease id="DI-06679">
        <name>Osteopetrosis, autosomal recessive 9</name>
        <acronym>OPTB9</acronym>
        <description>A form of osteopetrosis, a rare genetic disease characterized by abnormally dense bone, due to defective resorption of immature bone. Osteopetrosis occurs in two forms: a severe autosomal recessive form occurring in utero, infancy, or childhood, and a benign autosomal dominant form occurring in adolescence or adulthood. Recessive osteopetrosis commonly manifests in early infancy with macrocephaly, feeding difficulties, evolving blindness and deafness, bone marrow failure, severe anemia, and hepatosplenomegaly. Deafness and blindness are generally thought to represent effects of pressure on nerves. OPTB9 is characterized by increased bone density and bone fragility, as well as renal failure.</description>
        <dbReference type="MIM" id="620366"/>
    </disease>
    <text>The disease may be caused by variants affecting the gene represented in this entry.</text>
</comment>
<comment type="similarity">
    <text evidence="13">Belongs to the anion exchanger (TC 2.A.31) family.</text>
</comment>
<dbReference type="EMBL" id="X62137">
    <property type="protein sequence ID" value="CAA44067.1"/>
    <property type="molecule type" value="mRNA"/>
</dbReference>
<dbReference type="EMBL" id="DQ149844">
    <property type="protein sequence ID" value="AAZ38724.1"/>
    <property type="molecule type" value="Genomic_DNA"/>
</dbReference>
<dbReference type="EMBL" id="AK295767">
    <property type="protein sequence ID" value="BAG58592.1"/>
    <property type="molecule type" value="mRNA"/>
</dbReference>
<dbReference type="EMBL" id="AK312699">
    <property type="protein sequence ID" value="BAG35577.1"/>
    <property type="molecule type" value="mRNA"/>
</dbReference>
<dbReference type="EMBL" id="AC010973">
    <property type="status" value="NOT_ANNOTATED_CDS"/>
    <property type="molecule type" value="Genomic_DNA"/>
</dbReference>
<dbReference type="EMBL" id="CH471173">
    <property type="protein sequence ID" value="EAW54046.1"/>
    <property type="molecule type" value="Genomic_DNA"/>
</dbReference>
<dbReference type="EMBL" id="CH471173">
    <property type="protein sequence ID" value="EAW54047.1"/>
    <property type="molecule type" value="Genomic_DNA"/>
</dbReference>
<dbReference type="EMBL" id="BC009386">
    <property type="protein sequence ID" value="AAH09386.1"/>
    <property type="molecule type" value="mRNA"/>
</dbReference>
<dbReference type="EMBL" id="BC009434">
    <property type="protein sequence ID" value="AAH09434.1"/>
    <property type="molecule type" value="mRNA"/>
</dbReference>
<dbReference type="EMBL" id="X03918">
    <property type="protein sequence ID" value="CAA27556.1"/>
    <property type="molecule type" value="mRNA"/>
</dbReference>
<dbReference type="CCDS" id="CCDS56520.1">
    <molecule id="P04920-3"/>
</dbReference>
<dbReference type="CCDS" id="CCDS56521.1">
    <molecule id="P04920-2"/>
</dbReference>
<dbReference type="CCDS" id="CCDS5917.1">
    <molecule id="P04920-1"/>
</dbReference>
<dbReference type="PIR" id="S21086">
    <property type="entry name" value="S21086"/>
</dbReference>
<dbReference type="RefSeq" id="NP_001186621.1">
    <molecule id="P04920-1"/>
    <property type="nucleotide sequence ID" value="NM_001199692.3"/>
</dbReference>
<dbReference type="RefSeq" id="NP_001186622.1">
    <molecule id="P04920-3"/>
    <property type="nucleotide sequence ID" value="NM_001199693.1"/>
</dbReference>
<dbReference type="RefSeq" id="NP_001186623.1">
    <molecule id="P04920-2"/>
    <property type="nucleotide sequence ID" value="NM_001199694.2"/>
</dbReference>
<dbReference type="RefSeq" id="NP_003031.3">
    <molecule id="P04920-1"/>
    <property type="nucleotide sequence ID" value="NM_003040.3"/>
</dbReference>
<dbReference type="PDB" id="8GV8">
    <property type="method" value="EM"/>
    <property type="resolution" value="3.08 A"/>
    <property type="chains" value="A/B=1-1241"/>
</dbReference>
<dbReference type="PDB" id="8GV9">
    <property type="method" value="EM"/>
    <property type="resolution" value="3.06 A"/>
    <property type="chains" value="A/B=1-1241"/>
</dbReference>
<dbReference type="PDB" id="8GVA">
    <property type="method" value="EM"/>
    <property type="resolution" value="3.25 A"/>
    <property type="chains" value="A/B=1-1241"/>
</dbReference>
<dbReference type="PDB" id="8GVC">
    <property type="method" value="EM"/>
    <property type="resolution" value="2.89 A"/>
    <property type="chains" value="A/B=1-1241"/>
</dbReference>
<dbReference type="PDB" id="8GVE">
    <property type="method" value="EM"/>
    <property type="resolution" value="3.17 A"/>
    <property type="chains" value="A/B=1-1241"/>
</dbReference>
<dbReference type="PDB" id="8GVF">
    <property type="method" value="EM"/>
    <property type="resolution" value="3.09 A"/>
    <property type="chains" value="A/B=1-1241"/>
</dbReference>
<dbReference type="PDB" id="8GVH">
    <property type="method" value="EM"/>
    <property type="resolution" value="3.32 A"/>
    <property type="chains" value="A/B=1-1241"/>
</dbReference>
<dbReference type="PDB" id="8JNI">
    <property type="method" value="EM"/>
    <property type="resolution" value="3.20 A"/>
    <property type="chains" value="A/B=1-1241"/>
</dbReference>
<dbReference type="PDB" id="8JNJ">
    <property type="method" value="EM"/>
    <property type="resolution" value="3.30 A"/>
    <property type="chains" value="A/B=1-1241"/>
</dbReference>
<dbReference type="PDB" id="8ZLE">
    <property type="method" value="EM"/>
    <property type="resolution" value="3.35 A"/>
    <property type="chains" value="A/B=676-1241"/>
</dbReference>
<dbReference type="PDBsum" id="8GV8"/>
<dbReference type="PDBsum" id="8GV9"/>
<dbReference type="PDBsum" id="8GVA"/>
<dbReference type="PDBsum" id="8GVC"/>
<dbReference type="PDBsum" id="8GVE"/>
<dbReference type="PDBsum" id="8GVF"/>
<dbReference type="PDBsum" id="8GVH"/>
<dbReference type="PDBsum" id="8JNI"/>
<dbReference type="PDBsum" id="8JNJ"/>
<dbReference type="PDBsum" id="8ZLE"/>
<dbReference type="EMDB" id="EMD-34287"/>
<dbReference type="EMDB" id="EMD-34288"/>
<dbReference type="EMDB" id="EMD-34289"/>
<dbReference type="EMDB" id="EMD-34290"/>
<dbReference type="EMDB" id="EMD-34291"/>
<dbReference type="EMDB" id="EMD-34292"/>
<dbReference type="EMDB" id="EMD-34293"/>
<dbReference type="EMDB" id="EMD-36448"/>
<dbReference type="EMDB" id="EMD-36449"/>
<dbReference type="EMDB" id="EMD-60225"/>
<dbReference type="SMR" id="P04920"/>
<dbReference type="BioGRID" id="112413">
    <property type="interactions" value="161"/>
</dbReference>
<dbReference type="FunCoup" id="P04920">
    <property type="interactions" value="1039"/>
</dbReference>
<dbReference type="IntAct" id="P04920">
    <property type="interactions" value="93"/>
</dbReference>
<dbReference type="MINT" id="P04920"/>
<dbReference type="STRING" id="9606.ENSP00000419412"/>
<dbReference type="TCDB" id="2.A.31.1.2">
    <property type="family name" value="the anion exchanger (ae) family"/>
</dbReference>
<dbReference type="GlyCosmos" id="P04920">
    <property type="glycosylation" value="3 sites, No reported glycans"/>
</dbReference>
<dbReference type="GlyGen" id="P04920">
    <property type="glycosylation" value="6 sites, 3 N-linked glycans (3 sites), 1 O-linked glycan (1 site)"/>
</dbReference>
<dbReference type="iPTMnet" id="P04920"/>
<dbReference type="MetOSite" id="P04920"/>
<dbReference type="PhosphoSitePlus" id="P04920"/>
<dbReference type="SwissPalm" id="P04920"/>
<dbReference type="BioMuta" id="SLC4A2"/>
<dbReference type="DMDM" id="85687559"/>
<dbReference type="jPOST" id="P04920"/>
<dbReference type="MassIVE" id="P04920"/>
<dbReference type="PaxDb" id="9606-ENSP00000419412"/>
<dbReference type="PeptideAtlas" id="P04920"/>
<dbReference type="ProteomicsDB" id="29739"/>
<dbReference type="ProteomicsDB" id="51757">
    <molecule id="P04920-1"/>
</dbReference>
<dbReference type="ProteomicsDB" id="51758">
    <molecule id="P04920-2"/>
</dbReference>
<dbReference type="Pumba" id="P04920"/>
<dbReference type="Antibodypedia" id="18690">
    <property type="antibodies" value="154 antibodies from 29 providers"/>
</dbReference>
<dbReference type="DNASU" id="6522"/>
<dbReference type="Ensembl" id="ENST00000392826.6">
    <molecule id="P04920-3"/>
    <property type="protein sequence ID" value="ENSP00000376571.2"/>
    <property type="gene ID" value="ENSG00000164889.15"/>
</dbReference>
<dbReference type="Ensembl" id="ENST00000413384.7">
    <molecule id="P04920-1"/>
    <property type="protein sequence ID" value="ENSP00000405600.2"/>
    <property type="gene ID" value="ENSG00000164889.15"/>
</dbReference>
<dbReference type="Ensembl" id="ENST00000461735.1">
    <molecule id="P04920-2"/>
    <property type="protein sequence ID" value="ENSP00000419164.1"/>
    <property type="gene ID" value="ENSG00000164889.15"/>
</dbReference>
<dbReference type="Ensembl" id="ENST00000485713.5">
    <molecule id="P04920-1"/>
    <property type="protein sequence ID" value="ENSP00000419412.1"/>
    <property type="gene ID" value="ENSG00000164889.15"/>
</dbReference>
<dbReference type="GeneID" id="6522"/>
<dbReference type="KEGG" id="hsa:6522"/>
<dbReference type="MANE-Select" id="ENST00000413384.7">
    <property type="protein sequence ID" value="ENSP00000405600.2"/>
    <property type="RefSeq nucleotide sequence ID" value="NM_003040.4"/>
    <property type="RefSeq protein sequence ID" value="NP_003031.3"/>
</dbReference>
<dbReference type="UCSC" id="uc003wit.4">
    <molecule id="P04920-1"/>
    <property type="organism name" value="human"/>
</dbReference>
<dbReference type="AGR" id="HGNC:11028"/>
<dbReference type="CTD" id="6522"/>
<dbReference type="DisGeNET" id="6522"/>
<dbReference type="GeneCards" id="SLC4A2"/>
<dbReference type="HGNC" id="HGNC:11028">
    <property type="gene designation" value="SLC4A2"/>
</dbReference>
<dbReference type="HPA" id="ENSG00000164889">
    <property type="expression patterns" value="Tissue enhanced (choroid)"/>
</dbReference>
<dbReference type="MalaCards" id="SLC4A2"/>
<dbReference type="MIM" id="109280">
    <property type="type" value="gene"/>
</dbReference>
<dbReference type="MIM" id="620366">
    <property type="type" value="phenotype"/>
</dbReference>
<dbReference type="neXtProt" id="NX_P04920"/>
<dbReference type="OpenTargets" id="ENSG00000164889"/>
<dbReference type="PharmGKB" id="PA35896"/>
<dbReference type="VEuPathDB" id="HostDB:ENSG00000164889"/>
<dbReference type="eggNOG" id="KOG1172">
    <property type="taxonomic scope" value="Eukaryota"/>
</dbReference>
<dbReference type="GeneTree" id="ENSGT00940000158259"/>
<dbReference type="InParanoid" id="P04920"/>
<dbReference type="OMA" id="RYQRMPT"/>
<dbReference type="OrthoDB" id="1735926at2759"/>
<dbReference type="PAN-GO" id="P04920">
    <property type="GO annotations" value="7 GO annotations based on evolutionary models"/>
</dbReference>
<dbReference type="PhylomeDB" id="P04920"/>
<dbReference type="TreeFam" id="TF313630"/>
<dbReference type="PathwayCommons" id="P04920"/>
<dbReference type="Reactome" id="R-HSA-425381">
    <property type="pathway name" value="Bicarbonate transporters"/>
</dbReference>
<dbReference type="SignaLink" id="P04920"/>
<dbReference type="SIGNOR" id="P04920"/>
<dbReference type="BioGRID-ORCS" id="6522">
    <property type="hits" value="21 hits in 1164 CRISPR screens"/>
</dbReference>
<dbReference type="ChiTaRS" id="SLC4A2">
    <property type="organism name" value="human"/>
</dbReference>
<dbReference type="GeneWiki" id="SLC4A2"/>
<dbReference type="GenomeRNAi" id="6522"/>
<dbReference type="Pharos" id="P04920">
    <property type="development level" value="Tbio"/>
</dbReference>
<dbReference type="PRO" id="PR:P04920"/>
<dbReference type="Proteomes" id="UP000005640">
    <property type="component" value="Chromosome 7"/>
</dbReference>
<dbReference type="RNAct" id="P04920">
    <property type="molecule type" value="protein"/>
</dbReference>
<dbReference type="Bgee" id="ENSG00000164889">
    <property type="expression patterns" value="Expressed in body of stomach and 181 other cell types or tissues"/>
</dbReference>
<dbReference type="ExpressionAtlas" id="P04920">
    <property type="expression patterns" value="baseline and differential"/>
</dbReference>
<dbReference type="GO" id="GO:0016324">
    <property type="term" value="C:apical plasma membrane"/>
    <property type="evidence" value="ECO:0000318"/>
    <property type="project" value="GO_Central"/>
</dbReference>
<dbReference type="GO" id="GO:0016323">
    <property type="term" value="C:basolateral plasma membrane"/>
    <property type="evidence" value="ECO:0000318"/>
    <property type="project" value="GO_Central"/>
</dbReference>
<dbReference type="GO" id="GO:0005925">
    <property type="term" value="C:focal adhesion"/>
    <property type="evidence" value="ECO:0007005"/>
    <property type="project" value="UniProtKB"/>
</dbReference>
<dbReference type="GO" id="GO:0016020">
    <property type="term" value="C:membrane"/>
    <property type="evidence" value="ECO:0007005"/>
    <property type="project" value="UniProtKB"/>
</dbReference>
<dbReference type="GO" id="GO:0005886">
    <property type="term" value="C:plasma membrane"/>
    <property type="evidence" value="ECO:0000318"/>
    <property type="project" value="GO_Central"/>
</dbReference>
<dbReference type="GO" id="GO:0140900">
    <property type="term" value="F:chloride:bicarbonate antiporter activity"/>
    <property type="evidence" value="ECO:0000314"/>
    <property type="project" value="UniProtKB"/>
</dbReference>
<dbReference type="GO" id="GO:0019899">
    <property type="term" value="F:enzyme binding"/>
    <property type="evidence" value="ECO:0007669"/>
    <property type="project" value="Ensembl"/>
</dbReference>
<dbReference type="GO" id="GO:0008509">
    <property type="term" value="F:monoatomic anion transmembrane transporter activity"/>
    <property type="evidence" value="ECO:0000304"/>
    <property type="project" value="ProtInc"/>
</dbReference>
<dbReference type="GO" id="GO:0005452">
    <property type="term" value="F:solute:inorganic anion antiporter activity"/>
    <property type="evidence" value="ECO:0000304"/>
    <property type="project" value="Reactome"/>
</dbReference>
<dbReference type="GO" id="GO:0097186">
    <property type="term" value="P:amelogenesis"/>
    <property type="evidence" value="ECO:0000250"/>
    <property type="project" value="ARUK-UCL"/>
</dbReference>
<dbReference type="GO" id="GO:0015701">
    <property type="term" value="P:bicarbonate transport"/>
    <property type="evidence" value="ECO:0000318"/>
    <property type="project" value="GO_Central"/>
</dbReference>
<dbReference type="GO" id="GO:0048565">
    <property type="term" value="P:digestive tract development"/>
    <property type="evidence" value="ECO:0007669"/>
    <property type="project" value="Ensembl"/>
</dbReference>
<dbReference type="GO" id="GO:0006820">
    <property type="term" value="P:monoatomic anion transport"/>
    <property type="evidence" value="ECO:0000304"/>
    <property type="project" value="ProtInc"/>
</dbReference>
<dbReference type="GO" id="GO:0043377">
    <property type="term" value="P:negative regulation of CD8-positive, alpha-beta T cell differentiation"/>
    <property type="evidence" value="ECO:0000250"/>
    <property type="project" value="UniProtKB"/>
</dbReference>
<dbReference type="GO" id="GO:2000565">
    <property type="term" value="P:negative regulation of CD8-positive, alpha-beta T cell proliferation"/>
    <property type="evidence" value="ECO:0000250"/>
    <property type="project" value="UniProtKB"/>
</dbReference>
<dbReference type="GO" id="GO:0030316">
    <property type="term" value="P:osteoclast differentiation"/>
    <property type="evidence" value="ECO:0000315"/>
    <property type="project" value="UniProtKB"/>
</dbReference>
<dbReference type="GO" id="GO:0070175">
    <property type="term" value="P:positive regulation of enamel mineralization"/>
    <property type="evidence" value="ECO:0000250"/>
    <property type="project" value="ARUK-UCL"/>
</dbReference>
<dbReference type="GO" id="GO:0032956">
    <property type="term" value="P:regulation of actin cytoskeleton organization"/>
    <property type="evidence" value="ECO:0000250"/>
    <property type="project" value="UniProtKB"/>
</dbReference>
<dbReference type="GO" id="GO:0045124">
    <property type="term" value="P:regulation of bone resorption"/>
    <property type="evidence" value="ECO:0000250"/>
    <property type="project" value="UniProtKB"/>
</dbReference>
<dbReference type="GO" id="GO:0051453">
    <property type="term" value="P:regulation of intracellular pH"/>
    <property type="evidence" value="ECO:0000318"/>
    <property type="project" value="GO_Central"/>
</dbReference>
<dbReference type="GO" id="GO:0007283">
    <property type="term" value="P:spermatogenesis"/>
    <property type="evidence" value="ECO:0007669"/>
    <property type="project" value="Ensembl"/>
</dbReference>
<dbReference type="GO" id="GO:0055085">
    <property type="term" value="P:transmembrane transport"/>
    <property type="evidence" value="ECO:0000318"/>
    <property type="project" value="GO_Central"/>
</dbReference>
<dbReference type="FunFam" id="1.10.287.570:FF:000001">
    <property type="entry name" value="Anion exchange protein"/>
    <property type="match status" value="1"/>
</dbReference>
<dbReference type="FunFam" id="3.40.930.10:FF:000004">
    <property type="entry name" value="Anion exchange protein"/>
    <property type="match status" value="1"/>
</dbReference>
<dbReference type="Gene3D" id="1.10.287.570">
    <property type="entry name" value="Helical hairpin bin"/>
    <property type="match status" value="1"/>
</dbReference>
<dbReference type="Gene3D" id="3.40.930.10">
    <property type="entry name" value="Mannitol-specific EII, Chain A"/>
    <property type="match status" value="1"/>
</dbReference>
<dbReference type="InterPro" id="IPR001717">
    <property type="entry name" value="Anion_exchange"/>
</dbReference>
<dbReference type="InterPro" id="IPR002978">
    <property type="entry name" value="Anion_exchange_2"/>
</dbReference>
<dbReference type="InterPro" id="IPR018241">
    <property type="entry name" value="Anion_exchange_CS"/>
</dbReference>
<dbReference type="InterPro" id="IPR013769">
    <property type="entry name" value="Band3_cytoplasmic_dom"/>
</dbReference>
<dbReference type="InterPro" id="IPR011531">
    <property type="entry name" value="HCO3_transpt-like_TM_dom"/>
</dbReference>
<dbReference type="InterPro" id="IPR003020">
    <property type="entry name" value="HCO3_transpt_euk"/>
</dbReference>
<dbReference type="InterPro" id="IPR016152">
    <property type="entry name" value="PTrfase/Anion_transptr"/>
</dbReference>
<dbReference type="NCBIfam" id="TIGR00834">
    <property type="entry name" value="ae"/>
    <property type="match status" value="1"/>
</dbReference>
<dbReference type="PANTHER" id="PTHR11453">
    <property type="entry name" value="ANION EXCHANGE PROTEIN"/>
    <property type="match status" value="1"/>
</dbReference>
<dbReference type="PANTHER" id="PTHR11453:SF14">
    <property type="entry name" value="ANION EXCHANGE PROTEIN 2"/>
    <property type="match status" value="1"/>
</dbReference>
<dbReference type="Pfam" id="PF07565">
    <property type="entry name" value="Band_3_cyto"/>
    <property type="match status" value="1"/>
</dbReference>
<dbReference type="Pfam" id="PF00955">
    <property type="entry name" value="HCO3_cotransp"/>
    <property type="match status" value="1"/>
</dbReference>
<dbReference type="PRINTS" id="PR00165">
    <property type="entry name" value="ANIONEXCHNGR"/>
</dbReference>
<dbReference type="PRINTS" id="PR01188">
    <property type="entry name" value="ANIONEXHNGR2"/>
</dbReference>
<dbReference type="PRINTS" id="PR01231">
    <property type="entry name" value="HCO3TRNSPORT"/>
</dbReference>
<dbReference type="SUPFAM" id="SSF55804">
    <property type="entry name" value="Phoshotransferase/anion transport protein"/>
    <property type="match status" value="1"/>
</dbReference>
<dbReference type="PROSITE" id="PS00219">
    <property type="entry name" value="ANION_EXCHANGER_1"/>
    <property type="match status" value="1"/>
</dbReference>
<dbReference type="PROSITE" id="PS00220">
    <property type="entry name" value="ANION_EXCHANGER_2"/>
    <property type="match status" value="1"/>
</dbReference>
<organism>
    <name type="scientific">Homo sapiens</name>
    <name type="common">Human</name>
    <dbReference type="NCBI Taxonomy" id="9606"/>
    <lineage>
        <taxon>Eukaryota</taxon>
        <taxon>Metazoa</taxon>
        <taxon>Chordata</taxon>
        <taxon>Craniata</taxon>
        <taxon>Vertebrata</taxon>
        <taxon>Euteleostomi</taxon>
        <taxon>Mammalia</taxon>
        <taxon>Eutheria</taxon>
        <taxon>Euarchontoglires</taxon>
        <taxon>Primates</taxon>
        <taxon>Haplorrhini</taxon>
        <taxon>Catarrhini</taxon>
        <taxon>Hominidae</taxon>
        <taxon>Homo</taxon>
    </lineage>
</organism>
<sequence length="1241" mass="137009">MSSAPRRPAKGADSFCTPEPESLGPGTPGFPEQEEDELHRTLGVERFEEILQEAGSRGGEEPGRSYGEEDFEYHRQSSHHIHHPLSTHLPPDARRRKTPQGPGRKPRRRPGASPTGETPTIEEGEEDEDEASEAEGARALTQPSPVSTPSSVQFFLQEDDSADRKAERTSPSSPAPLPHQEATPRASKGAQAGTQVEEAEAEAVAVASGTAGGDDGGASGRPLPKAQPGHRSYNLQERRRIGSMTGAEQALLPRVPTDEIEAQTLATADLDLMKSHRFEDVPGVRRHLVRKNAKGSTQSGREGREPGPTPRARPRAPHKPHEVFVELNELLLDKNQEPQWRETARWIKFEEDVEEETERWGKPHVASLSFRSLLELRRTLAHGAVLLDLDQQTLPGVAHQVVEQMVISDQIKAEDRANVLRALLLKHSHPSDEKDFSFPRNISAGSLGSLLGHHHGQGAESDPHVTEPLMGGVPETRLEVERERELPPPAPPAGITRSKSKHELKLLEKIPENAEATVVLVGCVEFLSRPTMAFVRLREAVELDAVLEVPVPVRFLFLLLGPSSANMDYHEIGRSISTLMSDKQFHEAAYLADEREDLLTAINAFLDCSVVLPPSEVQGEELLRSVAHFQRQMLKKREEQGRLLPTGAGLEPKSAQDKALLQMVEAAGAAEDDPLRRTGRPFGGLIRDVRRRYPHYLSDFRDALDPQCLAAVIFIYFAALSPAITFGGLLGEKTQDLIGVSELIMSTALQGVVFCLLGAQPLLVIGFSGPLLVFEEAFFSFCSSNHLEYLVGRVWIGFWLVFLALLMVALEGSFLVRFVSRFTQEIFAFLISLIFIYETFYKLVKIFQEHPLHGCSASNSSEVDGGENMTWAGARPTLGPGNRSLAGQSGQGKPRGQPNTALLSLVLMAGTFFIAFFLRKFKNSRFFPGRIRRVIGDFGVPIAILIMVLVDYSIEDTYTQKLSVPSGFSVTAPEKRGWVINPLGEKSPFPVWMMVASLLPAILVFILIFMETQITTLIISKKERMLQKGSGFHLDLLLIVAMGGICALFGLPWLAAATVRSVTHANALTVMSKAVAPGDKPKIQEVKEQRVTGLLVALLVGLSIVIGDLLRQIPLAVLFGIFLYMGVTSLNGIQFYERLHLLLMPPKHHPDVTYVKKVRTLRMHLFTALQLLCLALLWAVMSTAASLAFPFILILTVPLRMVVLTRIFTDREMKCLDANEAEPVFDEREGVDEYNEMPMPV</sequence>
<gene>
    <name type="primary">SLC4A2</name>
    <name type="synonym">AE2</name>
    <name type="synonym">EPB3L1</name>
    <name type="synonym">HKB3</name>
    <name type="synonym">MPB3L</name>
</gene>
<protein>
    <recommendedName>
        <fullName>Anion exchange protein 2</fullName>
        <shortName>AE 2</shortName>
        <shortName>Anion exchanger 2</shortName>
    </recommendedName>
    <alternativeName>
        <fullName>Non-erythroid band 3-like protein</fullName>
        <shortName>BND3L</shortName>
    </alternativeName>
    <alternativeName>
        <fullName>Solute carrier family 4 member 2</fullName>
    </alternativeName>
</protein>
<proteinExistence type="evidence at protein level"/>
<reference key="1">
    <citation type="journal article" date="1992" name="Biochim. Biophys. Acta">
        <title>Complete nucleotide sequence of band 3 related anion transport protein AE2 from human kidney.</title>
        <authorList>
            <person name="Gehrig H."/>
            <person name="Mueller W."/>
            <person name="Appelhans H."/>
        </authorList>
    </citation>
    <scope>NUCLEOTIDE SEQUENCE [MRNA] (ISOFORM A)</scope>
</reference>
<reference key="2">
    <citation type="submission" date="2005-07" db="EMBL/GenBank/DDBJ databases">
        <authorList>
            <consortium name="NIEHS SNPs program"/>
        </authorList>
    </citation>
    <scope>NUCLEOTIDE SEQUENCE [GENOMIC DNA]</scope>
    <scope>VARIANTS GLU-26; VAL-202; TRP-311 AND PHE-1204</scope>
</reference>
<reference key="3">
    <citation type="journal article" date="2004" name="Nat. Genet.">
        <title>Complete sequencing and characterization of 21,243 full-length human cDNAs.</title>
        <authorList>
            <person name="Ota T."/>
            <person name="Suzuki Y."/>
            <person name="Nishikawa T."/>
            <person name="Otsuki T."/>
            <person name="Sugiyama T."/>
            <person name="Irie R."/>
            <person name="Wakamatsu A."/>
            <person name="Hayashi K."/>
            <person name="Sato H."/>
            <person name="Nagai K."/>
            <person name="Kimura K."/>
            <person name="Makita H."/>
            <person name="Sekine M."/>
            <person name="Obayashi M."/>
            <person name="Nishi T."/>
            <person name="Shibahara T."/>
            <person name="Tanaka T."/>
            <person name="Ishii S."/>
            <person name="Yamamoto J."/>
            <person name="Saito K."/>
            <person name="Kawai Y."/>
            <person name="Isono Y."/>
            <person name="Nakamura Y."/>
            <person name="Nagahari K."/>
            <person name="Murakami K."/>
            <person name="Yasuda T."/>
            <person name="Iwayanagi T."/>
            <person name="Wagatsuma M."/>
            <person name="Shiratori A."/>
            <person name="Sudo H."/>
            <person name="Hosoiri T."/>
            <person name="Kaku Y."/>
            <person name="Kodaira H."/>
            <person name="Kondo H."/>
            <person name="Sugawara M."/>
            <person name="Takahashi M."/>
            <person name="Kanda K."/>
            <person name="Yokoi T."/>
            <person name="Furuya T."/>
            <person name="Kikkawa E."/>
            <person name="Omura Y."/>
            <person name="Abe K."/>
            <person name="Kamihara K."/>
            <person name="Katsuta N."/>
            <person name="Sato K."/>
            <person name="Tanikawa M."/>
            <person name="Yamazaki M."/>
            <person name="Ninomiya K."/>
            <person name="Ishibashi T."/>
            <person name="Yamashita H."/>
            <person name="Murakawa K."/>
            <person name="Fujimori K."/>
            <person name="Tanai H."/>
            <person name="Kimata M."/>
            <person name="Watanabe M."/>
            <person name="Hiraoka S."/>
            <person name="Chiba Y."/>
            <person name="Ishida S."/>
            <person name="Ono Y."/>
            <person name="Takiguchi S."/>
            <person name="Watanabe S."/>
            <person name="Yosida M."/>
            <person name="Hotuta T."/>
            <person name="Kusano J."/>
            <person name="Kanehori K."/>
            <person name="Takahashi-Fujii A."/>
            <person name="Hara H."/>
            <person name="Tanase T.-O."/>
            <person name="Nomura Y."/>
            <person name="Togiya S."/>
            <person name="Komai F."/>
            <person name="Hara R."/>
            <person name="Takeuchi K."/>
            <person name="Arita M."/>
            <person name="Imose N."/>
            <person name="Musashino K."/>
            <person name="Yuuki H."/>
            <person name="Oshima A."/>
            <person name="Sasaki N."/>
            <person name="Aotsuka S."/>
            <person name="Yoshikawa Y."/>
            <person name="Matsunawa H."/>
            <person name="Ichihara T."/>
            <person name="Shiohata N."/>
            <person name="Sano S."/>
            <person name="Moriya S."/>
            <person name="Momiyama H."/>
            <person name="Satoh N."/>
            <person name="Takami S."/>
            <person name="Terashima Y."/>
            <person name="Suzuki O."/>
            <person name="Nakagawa S."/>
            <person name="Senoh A."/>
            <person name="Mizoguchi H."/>
            <person name="Goto Y."/>
            <person name="Shimizu F."/>
            <person name="Wakebe H."/>
            <person name="Hishigaki H."/>
            <person name="Watanabe T."/>
            <person name="Sugiyama A."/>
            <person name="Takemoto M."/>
            <person name="Kawakami B."/>
            <person name="Yamazaki M."/>
            <person name="Watanabe K."/>
            <person name="Kumagai A."/>
            <person name="Itakura S."/>
            <person name="Fukuzumi Y."/>
            <person name="Fujimori Y."/>
            <person name="Komiyama M."/>
            <person name="Tashiro H."/>
            <person name="Tanigami A."/>
            <person name="Fujiwara T."/>
            <person name="Ono T."/>
            <person name="Yamada K."/>
            <person name="Fujii Y."/>
            <person name="Ozaki K."/>
            <person name="Hirao M."/>
            <person name="Ohmori Y."/>
            <person name="Kawabata A."/>
            <person name="Hikiji T."/>
            <person name="Kobatake N."/>
            <person name="Inagaki H."/>
            <person name="Ikema Y."/>
            <person name="Okamoto S."/>
            <person name="Okitani R."/>
            <person name="Kawakami T."/>
            <person name="Noguchi S."/>
            <person name="Itoh T."/>
            <person name="Shigeta K."/>
            <person name="Senba T."/>
            <person name="Matsumura K."/>
            <person name="Nakajima Y."/>
            <person name="Mizuno T."/>
            <person name="Morinaga M."/>
            <person name="Sasaki M."/>
            <person name="Togashi T."/>
            <person name="Oyama M."/>
            <person name="Hata H."/>
            <person name="Watanabe M."/>
            <person name="Komatsu T."/>
            <person name="Mizushima-Sugano J."/>
            <person name="Satoh T."/>
            <person name="Shirai Y."/>
            <person name="Takahashi Y."/>
            <person name="Nakagawa K."/>
            <person name="Okumura K."/>
            <person name="Nagase T."/>
            <person name="Nomura N."/>
            <person name="Kikuchi H."/>
            <person name="Masuho Y."/>
            <person name="Yamashita R."/>
            <person name="Nakai K."/>
            <person name="Yada T."/>
            <person name="Nakamura Y."/>
            <person name="Ohara O."/>
            <person name="Isogai T."/>
            <person name="Sugano S."/>
        </authorList>
    </citation>
    <scope>NUCLEOTIDE SEQUENCE [LARGE SCALE MRNA] (ISOFORMS A AND B2)</scope>
    <source>
        <tissue>Hippocampus</tissue>
    </source>
</reference>
<reference key="4">
    <citation type="journal article" date="2003" name="Nature">
        <title>The DNA sequence of human chromosome 7.</title>
        <authorList>
            <person name="Hillier L.W."/>
            <person name="Fulton R.S."/>
            <person name="Fulton L.A."/>
            <person name="Graves T.A."/>
            <person name="Pepin K.H."/>
            <person name="Wagner-McPherson C."/>
            <person name="Layman D."/>
            <person name="Maas J."/>
            <person name="Jaeger S."/>
            <person name="Walker R."/>
            <person name="Wylie K."/>
            <person name="Sekhon M."/>
            <person name="Becker M.C."/>
            <person name="O'Laughlin M.D."/>
            <person name="Schaller M.E."/>
            <person name="Fewell G.A."/>
            <person name="Delehaunty K.D."/>
            <person name="Miner T.L."/>
            <person name="Nash W.E."/>
            <person name="Cordes M."/>
            <person name="Du H."/>
            <person name="Sun H."/>
            <person name="Edwards J."/>
            <person name="Bradshaw-Cordum H."/>
            <person name="Ali J."/>
            <person name="Andrews S."/>
            <person name="Isak A."/>
            <person name="Vanbrunt A."/>
            <person name="Nguyen C."/>
            <person name="Du F."/>
            <person name="Lamar B."/>
            <person name="Courtney L."/>
            <person name="Kalicki J."/>
            <person name="Ozersky P."/>
            <person name="Bielicki L."/>
            <person name="Scott K."/>
            <person name="Holmes A."/>
            <person name="Harkins R."/>
            <person name="Harris A."/>
            <person name="Strong C.M."/>
            <person name="Hou S."/>
            <person name="Tomlinson C."/>
            <person name="Dauphin-Kohlberg S."/>
            <person name="Kozlowicz-Reilly A."/>
            <person name="Leonard S."/>
            <person name="Rohlfing T."/>
            <person name="Rock S.M."/>
            <person name="Tin-Wollam A.-M."/>
            <person name="Abbott A."/>
            <person name="Minx P."/>
            <person name="Maupin R."/>
            <person name="Strowmatt C."/>
            <person name="Latreille P."/>
            <person name="Miller N."/>
            <person name="Johnson D."/>
            <person name="Murray J."/>
            <person name="Woessner J.P."/>
            <person name="Wendl M.C."/>
            <person name="Yang S.-P."/>
            <person name="Schultz B.R."/>
            <person name="Wallis J.W."/>
            <person name="Spieth J."/>
            <person name="Bieri T.A."/>
            <person name="Nelson J.O."/>
            <person name="Berkowicz N."/>
            <person name="Wohldmann P.E."/>
            <person name="Cook L.L."/>
            <person name="Hickenbotham M.T."/>
            <person name="Eldred J."/>
            <person name="Williams D."/>
            <person name="Bedell J.A."/>
            <person name="Mardis E.R."/>
            <person name="Clifton S.W."/>
            <person name="Chissoe S.L."/>
            <person name="Marra M.A."/>
            <person name="Raymond C."/>
            <person name="Haugen E."/>
            <person name="Gillett W."/>
            <person name="Zhou Y."/>
            <person name="James R."/>
            <person name="Phelps K."/>
            <person name="Iadanoto S."/>
            <person name="Bubb K."/>
            <person name="Simms E."/>
            <person name="Levy R."/>
            <person name="Clendenning J."/>
            <person name="Kaul R."/>
            <person name="Kent W.J."/>
            <person name="Furey T.S."/>
            <person name="Baertsch R.A."/>
            <person name="Brent M.R."/>
            <person name="Keibler E."/>
            <person name="Flicek P."/>
            <person name="Bork P."/>
            <person name="Suyama M."/>
            <person name="Bailey J.A."/>
            <person name="Portnoy M.E."/>
            <person name="Torrents D."/>
            <person name="Chinwalla A.T."/>
            <person name="Gish W.R."/>
            <person name="Eddy S.R."/>
            <person name="McPherson J.D."/>
            <person name="Olson M.V."/>
            <person name="Eichler E.E."/>
            <person name="Green E.D."/>
            <person name="Waterston R.H."/>
            <person name="Wilson R.K."/>
        </authorList>
    </citation>
    <scope>NUCLEOTIDE SEQUENCE [LARGE SCALE GENOMIC DNA]</scope>
</reference>
<reference key="5">
    <citation type="submission" date="2005-09" db="EMBL/GenBank/DDBJ databases">
        <authorList>
            <person name="Mural R.J."/>
            <person name="Istrail S."/>
            <person name="Sutton G.G."/>
            <person name="Florea L."/>
            <person name="Halpern A.L."/>
            <person name="Mobarry C.M."/>
            <person name="Lippert R."/>
            <person name="Walenz B."/>
            <person name="Shatkay H."/>
            <person name="Dew I."/>
            <person name="Miller J.R."/>
            <person name="Flanigan M.J."/>
            <person name="Edwards N.J."/>
            <person name="Bolanos R."/>
            <person name="Fasulo D."/>
            <person name="Halldorsson B.V."/>
            <person name="Hannenhalli S."/>
            <person name="Turner R."/>
            <person name="Yooseph S."/>
            <person name="Lu F."/>
            <person name="Nusskern D.R."/>
            <person name="Shue B.C."/>
            <person name="Zheng X.H."/>
            <person name="Zhong F."/>
            <person name="Delcher A.L."/>
            <person name="Huson D.H."/>
            <person name="Kravitz S.A."/>
            <person name="Mouchard L."/>
            <person name="Reinert K."/>
            <person name="Remington K.A."/>
            <person name="Clark A.G."/>
            <person name="Waterman M.S."/>
            <person name="Eichler E.E."/>
            <person name="Adams M.D."/>
            <person name="Hunkapiller M.W."/>
            <person name="Myers E.W."/>
            <person name="Venter J.C."/>
        </authorList>
    </citation>
    <scope>NUCLEOTIDE SEQUENCE [LARGE SCALE GENOMIC DNA]</scope>
</reference>
<reference key="6">
    <citation type="journal article" date="2004" name="Genome Res.">
        <title>The status, quality, and expansion of the NIH full-length cDNA project: the Mammalian Gene Collection (MGC).</title>
        <authorList>
            <consortium name="The MGC Project Team"/>
        </authorList>
    </citation>
    <scope>NUCLEOTIDE SEQUENCE [LARGE SCALE MRNA] (ISOFORM B1)</scope>
    <source>
        <tissue>Brain</tissue>
    </source>
</reference>
<reference key="7">
    <citation type="journal article" date="1986" name="EMBO J.">
        <title>Cloning and structural characterization of a human non-erythroid band 3-like protein.</title>
        <authorList>
            <person name="Demuth D.R."/>
            <person name="Showe L.C."/>
            <person name="Ballantine M."/>
            <person name="Palumbo A."/>
            <person name="Fraser P.J."/>
            <person name="Cioe L."/>
            <person name="Rovera G."/>
            <person name="Curtis P.J."/>
        </authorList>
    </citation>
    <scope>NUCLEOTIDE SEQUENCE [MRNA] OF 375-1241</scope>
</reference>
<reference key="8">
    <citation type="journal article" date="2000" name="Biochem. Biophys. Res. Commun.">
        <title>Tissue-specific N-terminal isoforms from overlapping alternate promoters of the human AE2 anion exchanger gene.</title>
        <authorList>
            <person name="Medina J.F."/>
            <person name="Lecanda J."/>
            <person name="Acin A."/>
            <person name="Ciesielczyk P."/>
            <person name="Prieto J."/>
        </authorList>
    </citation>
    <scope>ALTERNATIVE SPLICING (ISOFORMS A; B1 AND B2)</scope>
    <scope>TISSUE SPECIFICITY (ISOFORMS A; B1 AND B2)</scope>
</reference>
<reference key="9">
    <citation type="journal article" date="2004" name="Biochem. Biophys. Res. Commun.">
        <title>Shared apical sorting of anion exchanger isoforms AE2a, AE2b1, and AE2b2 in primary hepatocytes.</title>
        <authorList>
            <person name="Aranda V."/>
            <person name="Martinez I."/>
            <person name="Melero S."/>
            <person name="Lecanda J."/>
            <person name="Banales J.M."/>
            <person name="Prieto J."/>
            <person name="Medina J.F."/>
        </authorList>
    </citation>
    <scope>FUNCTION</scope>
    <scope>TRANSPORTER ACTIVITY (ISOFORMS A; B1 AND B2)</scope>
    <scope>SUBCELLULAR LOCATION (ISOFORMS A; B1 AND B2)</scope>
</reference>
<reference key="10">
    <citation type="journal article" date="2006" name="Cell">
        <title>Global, in vivo, and site-specific phosphorylation dynamics in signaling networks.</title>
        <authorList>
            <person name="Olsen J.V."/>
            <person name="Blagoev B."/>
            <person name="Gnad F."/>
            <person name="Macek B."/>
            <person name="Kumar C."/>
            <person name="Mortensen P."/>
            <person name="Mann M."/>
        </authorList>
    </citation>
    <scope>IDENTIFICATION BY MASS SPECTROMETRY [LARGE SCALE ANALYSIS]</scope>
    <source>
        <tissue>Cervix carcinoma</tissue>
    </source>
</reference>
<reference key="11">
    <citation type="journal article" date="2008" name="Proc. Natl. Acad. Sci. U.S.A.">
        <title>A quantitative atlas of mitotic phosphorylation.</title>
        <authorList>
            <person name="Dephoure N."/>
            <person name="Zhou C."/>
            <person name="Villen J."/>
            <person name="Beausoleil S.A."/>
            <person name="Bakalarski C.E."/>
            <person name="Elledge S.J."/>
            <person name="Gygi S.P."/>
        </authorList>
    </citation>
    <scope>PHOSPHORYLATION [LARGE SCALE ANALYSIS] AT SER-113; SER-132; SER-173 AND THR-183</scope>
    <scope>IDENTIFICATION BY MASS SPECTROMETRY [LARGE SCALE ANALYSIS]</scope>
    <source>
        <tissue>Cervix carcinoma</tissue>
    </source>
</reference>
<reference key="12">
    <citation type="journal article" date="2009" name="Anal. Chem.">
        <title>Lys-N and trypsin cover complementary parts of the phosphoproteome in a refined SCX-based approach.</title>
        <authorList>
            <person name="Gauci S."/>
            <person name="Helbig A.O."/>
            <person name="Slijper M."/>
            <person name="Krijgsveld J."/>
            <person name="Heck A.J."/>
            <person name="Mohammed S."/>
        </authorList>
    </citation>
    <scope>IDENTIFICATION BY MASS SPECTROMETRY [LARGE SCALE ANALYSIS]</scope>
</reference>
<reference key="13">
    <citation type="journal article" date="2009" name="Sci. Signal.">
        <title>Quantitative phosphoproteomic analysis of T cell receptor signaling reveals system-wide modulation of protein-protein interactions.</title>
        <authorList>
            <person name="Mayya V."/>
            <person name="Lundgren D.H."/>
            <person name="Hwang S.-I."/>
            <person name="Rezaul K."/>
            <person name="Wu L."/>
            <person name="Eng J.K."/>
            <person name="Rodionov V."/>
            <person name="Han D.K."/>
        </authorList>
    </citation>
    <scope>PHOSPHORYLATION [LARGE SCALE ANALYSIS] AT SER-144</scope>
    <scope>IDENTIFICATION BY MASS SPECTROMETRY [LARGE SCALE ANALYSIS]</scope>
    <source>
        <tissue>Leukemic T-cell</tissue>
    </source>
</reference>
<reference key="14">
    <citation type="journal article" date="2010" name="Sci. Signal.">
        <title>Quantitative phosphoproteomics reveals widespread full phosphorylation site occupancy during mitosis.</title>
        <authorList>
            <person name="Olsen J.V."/>
            <person name="Vermeulen M."/>
            <person name="Santamaria A."/>
            <person name="Kumar C."/>
            <person name="Miller M.L."/>
            <person name="Jensen L.J."/>
            <person name="Gnad F."/>
            <person name="Cox J."/>
            <person name="Jensen T.S."/>
            <person name="Nigg E.A."/>
            <person name="Brunak S."/>
            <person name="Mann M."/>
        </authorList>
    </citation>
    <scope>IDENTIFICATION BY MASS SPECTROMETRY [LARGE SCALE ANALYSIS]</scope>
    <source>
        <tissue>Cervix carcinoma</tissue>
    </source>
</reference>
<reference key="15">
    <citation type="journal article" date="2011" name="Sci. Signal.">
        <title>System-wide temporal characterization of the proteome and phosphoproteome of human embryonic stem cell differentiation.</title>
        <authorList>
            <person name="Rigbolt K.T."/>
            <person name="Prokhorova T.A."/>
            <person name="Akimov V."/>
            <person name="Henningsen J."/>
            <person name="Johansen P.T."/>
            <person name="Kratchmarova I."/>
            <person name="Kassem M."/>
            <person name="Mann M."/>
            <person name="Olsen J.V."/>
            <person name="Blagoev B."/>
        </authorList>
    </citation>
    <scope>PHOSPHORYLATION [LARGE SCALE ANALYSIS] AT SER-443</scope>
    <scope>IDENTIFICATION BY MASS SPECTROMETRY [LARGE SCALE ANALYSIS]</scope>
</reference>
<reference key="16">
    <citation type="journal article" date="2013" name="J. Proteome Res.">
        <title>Toward a comprehensive characterization of a human cancer cell phosphoproteome.</title>
        <authorList>
            <person name="Zhou H."/>
            <person name="Di Palma S."/>
            <person name="Preisinger C."/>
            <person name="Peng M."/>
            <person name="Polat A.N."/>
            <person name="Heck A.J."/>
            <person name="Mohammed S."/>
        </authorList>
    </citation>
    <scope>PHOSPHORYLATION [LARGE SCALE ANALYSIS] AT SER-173 AND SER-243</scope>
    <scope>IDENTIFICATION BY MASS SPECTROMETRY [LARGE SCALE ANALYSIS]</scope>
    <source>
        <tissue>Cervix carcinoma</tissue>
        <tissue>Erythroleukemia</tissue>
    </source>
</reference>
<reference key="17">
    <citation type="journal article" date="2014" name="J. Proteomics">
        <title>An enzyme assisted RP-RPLC approach for in-depth analysis of human liver phosphoproteome.</title>
        <authorList>
            <person name="Bian Y."/>
            <person name="Song C."/>
            <person name="Cheng K."/>
            <person name="Dong M."/>
            <person name="Wang F."/>
            <person name="Huang J."/>
            <person name="Sun D."/>
            <person name="Wang L."/>
            <person name="Ye M."/>
            <person name="Zou H."/>
        </authorList>
    </citation>
    <scope>IDENTIFICATION BY MASS SPECTROMETRY [LARGE SCALE ANALYSIS]</scope>
    <source>
        <tissue>Liver</tissue>
    </source>
</reference>
<reference key="18">
    <citation type="journal article" date="2014" name="Mol. Cell. Proteomics">
        <title>Immunoaffinity enrichment and mass spectrometry analysis of protein methylation.</title>
        <authorList>
            <person name="Guo A."/>
            <person name="Gu H."/>
            <person name="Zhou J."/>
            <person name="Mulhern D."/>
            <person name="Wang Y."/>
            <person name="Lee K.A."/>
            <person name="Yang V."/>
            <person name="Aguiar M."/>
            <person name="Kornhauser J."/>
            <person name="Jia X."/>
            <person name="Ren J."/>
            <person name="Beausoleil S.A."/>
            <person name="Silva J.C."/>
            <person name="Vemulapalli V."/>
            <person name="Bedford M.T."/>
            <person name="Comb M.J."/>
        </authorList>
    </citation>
    <scope>METHYLATION [LARGE SCALE ANALYSIS] AT LYS-274</scope>
    <scope>IDENTIFICATION BY MASS SPECTROMETRY [LARGE SCALE ANALYSIS]</scope>
    <source>
        <tissue>Colon carcinoma</tissue>
    </source>
</reference>
<reference key="19">
    <citation type="journal article" date="2015" name="Proteomics">
        <title>N-terminome analysis of the human mitochondrial proteome.</title>
        <authorList>
            <person name="Vaca Jacome A.S."/>
            <person name="Rabilloud T."/>
            <person name="Schaeffer-Reiss C."/>
            <person name="Rompais M."/>
            <person name="Ayoub D."/>
            <person name="Lane L."/>
            <person name="Bairoch A."/>
            <person name="Van Dorsselaer A."/>
            <person name="Carapito C."/>
        </authorList>
    </citation>
    <scope>IDENTIFICATION BY MASS SPECTROMETRY [LARGE SCALE ANALYSIS]</scope>
</reference>
<reference key="20">
    <citation type="journal article" date="2022" name="J. Bone Miner. Res.">
        <title>SLC4A2 Deficiency Causes a New Type of Osteopetrosis.</title>
        <authorList>
            <person name="Xue J.Y."/>
            <person name="Grigelioniene G."/>
            <person name="Wang Z."/>
            <person name="Nishimura G."/>
            <person name="Iida A."/>
            <person name="Matsumoto N."/>
            <person name="Tham E."/>
            <person name="Miyake N."/>
            <person name="Ikegawa S."/>
            <person name="Guo L."/>
        </authorList>
    </citation>
    <scope>INVOLVEMENT IN OPTB9</scope>
    <scope>VARIANTS OPTB9 THR-186 AND ALA-553</scope>
    <scope>CHARACTERIZATION OF VARIANTS OPTB9 THR-186 AND ALA-553</scope>
    <scope>FUNCTION</scope>
    <scope>TRANSPORTER ACTIVITY</scope>
</reference>
<name>B3A2_HUMAN</name>